<sequence length="354" mass="39472">MIPKKIIIMAGGSGGHVFPGLTIARYLIEKGWLVNWIGTKNSIESRIIPTYGIKIHYISIKGLRNTSLKNLIISPIYILRAYYAVKKIIKTWSPDIVLGMGGYVSGPGGVASWNCNIPLLLHEQNKIAGITNKWLSRISTKNMQASPGVLRNAEVVGNPVCQSIIKVPNPINRFKNRTGLLRVLVIGGSQGSSILNRILPKVSFLLKEKIIFWHQTGNYELEKTKKKYNKLRLNQNLITSFIKNIASAYEWADLIICRSGALTVSEISIVGLGAIFIPYPHKDKQQHRNAEDLELIGAAKIIDQSNLNTKLIVNILNSLDRDKLFIMAKKAHSLGVRDAIFNIFNVINKISKKT</sequence>
<feature type="chain" id="PRO_1000117005" description="UDP-N-acetylglucosamine--N-acetylmuramyl-(pentapeptide) pyrophosphoryl-undecaprenol N-acetylglucosamine transferase">
    <location>
        <begin position="1"/>
        <end position="354"/>
    </location>
</feature>
<feature type="binding site" evidence="1">
    <location>
        <begin position="13"/>
        <end position="15"/>
    </location>
    <ligand>
        <name>UDP-N-acetyl-alpha-D-glucosamine</name>
        <dbReference type="ChEBI" id="CHEBI:57705"/>
    </ligand>
</feature>
<feature type="binding site" evidence="1">
    <location>
        <position position="125"/>
    </location>
    <ligand>
        <name>UDP-N-acetyl-alpha-D-glucosamine</name>
        <dbReference type="ChEBI" id="CHEBI:57705"/>
    </ligand>
</feature>
<feature type="binding site" evidence="1">
    <location>
        <position position="189"/>
    </location>
    <ligand>
        <name>UDP-N-acetyl-alpha-D-glucosamine</name>
        <dbReference type="ChEBI" id="CHEBI:57705"/>
    </ligand>
</feature>
<feature type="binding site" evidence="1">
    <location>
        <position position="242"/>
    </location>
    <ligand>
        <name>UDP-N-acetyl-alpha-D-glucosamine</name>
        <dbReference type="ChEBI" id="CHEBI:57705"/>
    </ligand>
</feature>
<feature type="binding site" evidence="1">
    <location>
        <begin position="261"/>
        <end position="266"/>
    </location>
    <ligand>
        <name>UDP-N-acetyl-alpha-D-glucosamine</name>
        <dbReference type="ChEBI" id="CHEBI:57705"/>
    </ligand>
</feature>
<feature type="binding site" evidence="1">
    <location>
        <position position="286"/>
    </location>
    <ligand>
        <name>UDP-N-acetyl-alpha-D-glucosamine</name>
        <dbReference type="ChEBI" id="CHEBI:57705"/>
    </ligand>
</feature>
<name>MURG_BUCA5</name>
<organism>
    <name type="scientific">Buchnera aphidicola subsp. Acyrthosiphon pisum (strain 5A)</name>
    <dbReference type="NCBI Taxonomy" id="563178"/>
    <lineage>
        <taxon>Bacteria</taxon>
        <taxon>Pseudomonadati</taxon>
        <taxon>Pseudomonadota</taxon>
        <taxon>Gammaproteobacteria</taxon>
        <taxon>Enterobacterales</taxon>
        <taxon>Erwiniaceae</taxon>
        <taxon>Buchnera</taxon>
    </lineage>
</organism>
<dbReference type="EC" id="2.4.1.227" evidence="1"/>
<dbReference type="EMBL" id="CP001161">
    <property type="protein sequence ID" value="ACL30585.1"/>
    <property type="molecule type" value="Genomic_DNA"/>
</dbReference>
<dbReference type="RefSeq" id="WP_009874173.1">
    <property type="nucleotide sequence ID" value="NC_011833.1"/>
</dbReference>
<dbReference type="SMR" id="B8D914"/>
<dbReference type="CAZy" id="GT28">
    <property type="family name" value="Glycosyltransferase Family 28"/>
</dbReference>
<dbReference type="KEGG" id="bap:BUAP5A_212"/>
<dbReference type="HOGENOM" id="CLU_037404_2_0_6"/>
<dbReference type="OrthoDB" id="9808936at2"/>
<dbReference type="UniPathway" id="UPA00219"/>
<dbReference type="Proteomes" id="UP000006904">
    <property type="component" value="Chromosome"/>
</dbReference>
<dbReference type="GO" id="GO:0005886">
    <property type="term" value="C:plasma membrane"/>
    <property type="evidence" value="ECO:0007669"/>
    <property type="project" value="UniProtKB-SubCell"/>
</dbReference>
<dbReference type="GO" id="GO:0051991">
    <property type="term" value="F:UDP-N-acetyl-D-glucosamine:N-acetylmuramoyl-L-alanyl-D-glutamyl-meso-2,6-diaminopimelyl-D-alanyl-D-alanine-diphosphoundecaprenol 4-beta-N-acetylglucosaminlytransferase activity"/>
    <property type="evidence" value="ECO:0007669"/>
    <property type="project" value="RHEA"/>
</dbReference>
<dbReference type="GO" id="GO:0050511">
    <property type="term" value="F:undecaprenyldiphospho-muramoylpentapeptide beta-N-acetylglucosaminyltransferase activity"/>
    <property type="evidence" value="ECO:0007669"/>
    <property type="project" value="UniProtKB-UniRule"/>
</dbReference>
<dbReference type="GO" id="GO:0005975">
    <property type="term" value="P:carbohydrate metabolic process"/>
    <property type="evidence" value="ECO:0007669"/>
    <property type="project" value="InterPro"/>
</dbReference>
<dbReference type="GO" id="GO:0051301">
    <property type="term" value="P:cell division"/>
    <property type="evidence" value="ECO:0007669"/>
    <property type="project" value="UniProtKB-KW"/>
</dbReference>
<dbReference type="GO" id="GO:0071555">
    <property type="term" value="P:cell wall organization"/>
    <property type="evidence" value="ECO:0007669"/>
    <property type="project" value="UniProtKB-KW"/>
</dbReference>
<dbReference type="GO" id="GO:0030259">
    <property type="term" value="P:lipid glycosylation"/>
    <property type="evidence" value="ECO:0007669"/>
    <property type="project" value="UniProtKB-UniRule"/>
</dbReference>
<dbReference type="GO" id="GO:0009252">
    <property type="term" value="P:peptidoglycan biosynthetic process"/>
    <property type="evidence" value="ECO:0007669"/>
    <property type="project" value="UniProtKB-UniRule"/>
</dbReference>
<dbReference type="GO" id="GO:0008360">
    <property type="term" value="P:regulation of cell shape"/>
    <property type="evidence" value="ECO:0007669"/>
    <property type="project" value="UniProtKB-KW"/>
</dbReference>
<dbReference type="CDD" id="cd03785">
    <property type="entry name" value="GT28_MurG"/>
    <property type="match status" value="1"/>
</dbReference>
<dbReference type="Gene3D" id="3.40.50.2000">
    <property type="entry name" value="Glycogen Phosphorylase B"/>
    <property type="match status" value="2"/>
</dbReference>
<dbReference type="HAMAP" id="MF_00033">
    <property type="entry name" value="MurG"/>
    <property type="match status" value="1"/>
</dbReference>
<dbReference type="InterPro" id="IPR006009">
    <property type="entry name" value="GlcNAc_MurG"/>
</dbReference>
<dbReference type="InterPro" id="IPR007235">
    <property type="entry name" value="Glyco_trans_28_C"/>
</dbReference>
<dbReference type="InterPro" id="IPR004276">
    <property type="entry name" value="GlycoTrans_28_N"/>
</dbReference>
<dbReference type="NCBIfam" id="TIGR01133">
    <property type="entry name" value="murG"/>
    <property type="match status" value="1"/>
</dbReference>
<dbReference type="PANTHER" id="PTHR21015:SF22">
    <property type="entry name" value="GLYCOSYLTRANSFERASE"/>
    <property type="match status" value="1"/>
</dbReference>
<dbReference type="PANTHER" id="PTHR21015">
    <property type="entry name" value="UDP-N-ACETYLGLUCOSAMINE--N-ACETYLMURAMYL-(PENTAPEPTIDE) PYROPHOSPHORYL-UNDECAPRENOL N-ACETYLGLUCOSAMINE TRANSFERASE 1"/>
    <property type="match status" value="1"/>
</dbReference>
<dbReference type="Pfam" id="PF04101">
    <property type="entry name" value="Glyco_tran_28_C"/>
    <property type="match status" value="1"/>
</dbReference>
<dbReference type="Pfam" id="PF03033">
    <property type="entry name" value="Glyco_transf_28"/>
    <property type="match status" value="1"/>
</dbReference>
<dbReference type="SUPFAM" id="SSF53756">
    <property type="entry name" value="UDP-Glycosyltransferase/glycogen phosphorylase"/>
    <property type="match status" value="1"/>
</dbReference>
<evidence type="ECO:0000255" key="1">
    <source>
        <dbReference type="HAMAP-Rule" id="MF_00033"/>
    </source>
</evidence>
<protein>
    <recommendedName>
        <fullName evidence="1">UDP-N-acetylglucosamine--N-acetylmuramyl-(pentapeptide) pyrophosphoryl-undecaprenol N-acetylglucosamine transferase</fullName>
        <ecNumber evidence="1">2.4.1.227</ecNumber>
    </recommendedName>
    <alternativeName>
        <fullName evidence="1">Undecaprenyl-PP-MurNAc-pentapeptide-UDPGlcNAc GlcNAc transferase</fullName>
    </alternativeName>
</protein>
<keyword id="KW-0131">Cell cycle</keyword>
<keyword id="KW-0132">Cell division</keyword>
<keyword id="KW-0997">Cell inner membrane</keyword>
<keyword id="KW-1003">Cell membrane</keyword>
<keyword id="KW-0133">Cell shape</keyword>
<keyword id="KW-0961">Cell wall biogenesis/degradation</keyword>
<keyword id="KW-0328">Glycosyltransferase</keyword>
<keyword id="KW-0472">Membrane</keyword>
<keyword id="KW-0573">Peptidoglycan synthesis</keyword>
<keyword id="KW-0808">Transferase</keyword>
<gene>
    <name evidence="1" type="primary">murG</name>
    <name type="ordered locus">BUAP5A_212</name>
</gene>
<comment type="function">
    <text evidence="1">Cell wall formation. Catalyzes the transfer of a GlcNAc subunit on undecaprenyl-pyrophosphoryl-MurNAc-pentapeptide (lipid intermediate I) to form undecaprenyl-pyrophosphoryl-MurNAc-(pentapeptide)GlcNAc (lipid intermediate II).</text>
</comment>
<comment type="catalytic activity">
    <reaction evidence="1">
        <text>di-trans,octa-cis-undecaprenyl diphospho-N-acetyl-alpha-D-muramoyl-L-alanyl-D-glutamyl-meso-2,6-diaminopimeloyl-D-alanyl-D-alanine + UDP-N-acetyl-alpha-D-glucosamine = di-trans,octa-cis-undecaprenyl diphospho-[N-acetyl-alpha-D-glucosaminyl-(1-&gt;4)]-N-acetyl-alpha-D-muramoyl-L-alanyl-D-glutamyl-meso-2,6-diaminopimeloyl-D-alanyl-D-alanine + UDP + H(+)</text>
        <dbReference type="Rhea" id="RHEA:31227"/>
        <dbReference type="ChEBI" id="CHEBI:15378"/>
        <dbReference type="ChEBI" id="CHEBI:57705"/>
        <dbReference type="ChEBI" id="CHEBI:58223"/>
        <dbReference type="ChEBI" id="CHEBI:61387"/>
        <dbReference type="ChEBI" id="CHEBI:61388"/>
        <dbReference type="EC" id="2.4.1.227"/>
    </reaction>
</comment>
<comment type="pathway">
    <text evidence="1">Cell wall biogenesis; peptidoglycan biosynthesis.</text>
</comment>
<comment type="subcellular location">
    <subcellularLocation>
        <location evidence="1">Cell inner membrane</location>
        <topology evidence="1">Peripheral membrane protein</topology>
        <orientation evidence="1">Cytoplasmic side</orientation>
    </subcellularLocation>
</comment>
<comment type="similarity">
    <text evidence="1">Belongs to the glycosyltransferase 28 family. MurG subfamily.</text>
</comment>
<proteinExistence type="inferred from homology"/>
<reference key="1">
    <citation type="journal article" date="2009" name="Science">
        <title>The dynamics and time scale of ongoing genomic erosion in symbiotic bacteria.</title>
        <authorList>
            <person name="Moran N.A."/>
            <person name="McLaughlin H.J."/>
            <person name="Sorek R."/>
        </authorList>
    </citation>
    <scope>NUCLEOTIDE SEQUENCE [LARGE SCALE GENOMIC DNA]</scope>
    <source>
        <strain>5A</strain>
    </source>
</reference>
<accession>B8D914</accession>